<keyword id="KW-0007">Acetylation</keyword>
<keyword id="KW-0010">Activator</keyword>
<keyword id="KW-0158">Chromosome</keyword>
<keyword id="KW-0963">Cytoplasm</keyword>
<keyword id="KW-0238">DNA-binding</keyword>
<keyword id="KW-0325">Glycoprotein</keyword>
<keyword id="KW-1017">Isopeptide bond</keyword>
<keyword id="KW-0539">Nucleus</keyword>
<keyword id="KW-0597">Phosphoprotein</keyword>
<keyword id="KW-0656">Proto-oncogene</keyword>
<keyword id="KW-0804">Transcription</keyword>
<keyword id="KW-0805">Transcription regulation</keyword>
<keyword id="KW-0832">Ubl conjugation</keyword>
<accession>Q9MZT6</accession>
<reference key="1">
    <citation type="journal article" date="2000" name="Syst. Biol.">
        <title>c-myc gene sequences and the phylogeny of bats and other eutherian mammals.</title>
        <authorList>
            <person name="Miyamoto M.M."/>
            <person name="Porter C.A."/>
            <person name="Goodman M."/>
        </authorList>
    </citation>
    <scope>NUCLEOTIDE SEQUENCE [GENOMIC DNA]</scope>
</reference>
<name>MYC_SYLFL</name>
<protein>
    <recommendedName>
        <fullName>Myc proto-oncogene protein</fullName>
    </recommendedName>
    <alternativeName>
        <fullName>Proto-oncogene c-Myc</fullName>
    </alternativeName>
    <alternativeName>
        <fullName>Transcription factor p64</fullName>
    </alternativeName>
</protein>
<feature type="chain" id="PRO_0000127302" description="Myc proto-oncogene protein">
    <location>
        <begin position="1"/>
        <end position="438"/>
    </location>
</feature>
<feature type="domain" description="bHLH" evidence="4">
    <location>
        <begin position="353"/>
        <end position="405"/>
    </location>
</feature>
<feature type="region of interest" description="Disordered" evidence="5">
    <location>
        <begin position="201"/>
        <end position="364"/>
    </location>
</feature>
<feature type="region of interest" description="Leucine-zipper">
    <location>
        <begin position="412"/>
        <end position="433"/>
    </location>
</feature>
<feature type="short sequence motif" description="9aaTAD" evidence="2">
    <location>
        <begin position="101"/>
        <end position="109"/>
    </location>
</feature>
<feature type="short sequence motif" description="UBR5-degron" evidence="2">
    <location>
        <begin position="354"/>
        <end position="363"/>
    </location>
</feature>
<feature type="compositionally biased region" description="Low complexity" evidence="5">
    <location>
        <begin position="208"/>
        <end position="238"/>
    </location>
</feature>
<feature type="compositionally biased region" description="Acidic residues" evidence="5">
    <location>
        <begin position="252"/>
        <end position="264"/>
    </location>
</feature>
<feature type="compositionally biased region" description="Basic and acidic residues" evidence="5">
    <location>
        <begin position="314"/>
        <end position="330"/>
    </location>
</feature>
<feature type="compositionally biased region" description="Polar residues" evidence="5">
    <location>
        <begin position="334"/>
        <end position="346"/>
    </location>
</feature>
<feature type="modified residue" description="Phosphoserine" evidence="2">
    <location>
        <position position="6"/>
    </location>
</feature>
<feature type="modified residue" description="Phosphothreonine" evidence="2">
    <location>
        <position position="9"/>
    </location>
</feature>
<feature type="modified residue" description="Phosphothreonine; by GSK3; alternate" evidence="2">
    <location>
        <position position="59"/>
    </location>
</feature>
<feature type="modified residue" description="Phosphoserine; by DYRK2, GSK3 and CDK2" evidence="2">
    <location>
        <position position="63"/>
    </location>
</feature>
<feature type="modified residue" description="Phosphoserine" evidence="2">
    <location>
        <position position="72"/>
    </location>
</feature>
<feature type="modified residue" description="Phosphoserine" evidence="2">
    <location>
        <position position="82"/>
    </location>
</feature>
<feature type="modified residue" description="N6-acetyllysine; by PCAF; alternate" evidence="2">
    <location>
        <position position="144"/>
    </location>
</feature>
<feature type="modified residue" description="N6-acetyllysine; alternate" evidence="2">
    <location>
        <position position="149"/>
    </location>
</feature>
<feature type="modified residue" description="Phosphoserine" evidence="2">
    <location>
        <position position="152"/>
    </location>
</feature>
<feature type="modified residue" description="N6-acetyllysine; by PCAF" evidence="2">
    <location>
        <position position="158"/>
    </location>
</feature>
<feature type="modified residue" description="Phosphoserine" evidence="2">
    <location>
        <position position="160"/>
    </location>
</feature>
<feature type="modified residue" description="Phosphoserine" evidence="2">
    <location>
        <position position="162"/>
    </location>
</feature>
<feature type="modified residue" description="N6-acetyllysine; by PCAF" evidence="2">
    <location>
        <position position="276"/>
    </location>
</feature>
<feature type="modified residue" description="Phosphoserine" evidence="2">
    <location>
        <position position="292"/>
    </location>
</feature>
<feature type="modified residue" description="Phosphoserine" evidence="2">
    <location>
        <position position="313"/>
    </location>
</feature>
<feature type="modified residue" description="Phosphothreonine" evidence="2">
    <location>
        <position position="314"/>
    </location>
</feature>
<feature type="modified residue" description="N6-acetyllysine; by PCAF" evidence="2">
    <location>
        <position position="316"/>
    </location>
</feature>
<feature type="modified residue" description="N6-acetyllysine; by PCAF" evidence="2">
    <location>
        <position position="322"/>
    </location>
</feature>
<feature type="modified residue" description="Phosphoserine; by PIM2; in vitro" evidence="3">
    <location>
        <position position="328"/>
    </location>
</feature>
<feature type="modified residue" description="Phosphoserine" evidence="2">
    <location>
        <position position="343"/>
    </location>
</feature>
<feature type="modified residue" description="Phosphoserine" evidence="2">
    <location>
        <position position="346"/>
    </location>
</feature>
<feature type="modified residue" description="Phosphoserine" evidence="2">
    <location>
        <position position="347"/>
    </location>
</feature>
<feature type="modified residue" description="N6-acetyllysine; by PCAF" evidence="2">
    <location>
        <position position="370"/>
    </location>
</feature>
<feature type="glycosylation site" description="O-linked (GlcNAc) threonine; alternate" evidence="1">
    <location>
        <position position="59"/>
    </location>
</feature>
<feature type="cross-link" description="Glycyl lysine isopeptide (Lys-Gly) (interchain with G-Cter in SUMO2)" evidence="2">
    <location>
        <position position="53"/>
    </location>
</feature>
<feature type="cross-link" description="Glycyl lysine isopeptide (Lys-Gly) (interchain with G-Cter in SUMO2); alternate" evidence="2">
    <location>
        <position position="144"/>
    </location>
</feature>
<feature type="cross-link" description="Glycyl lysine isopeptide (Lys-Gly) (interchain with G-Cter in SUMO2); alternate" evidence="2">
    <location>
        <position position="149"/>
    </location>
</feature>
<feature type="cross-link" description="Glycyl lysine isopeptide (Lys-Gly) (interchain with G-Cter in SUMO2)" evidence="2">
    <location>
        <position position="297"/>
    </location>
</feature>
<proteinExistence type="inferred from homology"/>
<sequence>MPLNVSFATNRNYDLDYDSVQPYFYCDEEENFYQQQQQSELQPPAPSEDIWKKFELLPTPPLSPSRRSGLCSPSYVAVASFSPRGDDGGGGGSFSTADQLEMVTELLGGDMVNQSFICDPDDETFIKNIIIQDCMWSGFSAAAKLVSEKLASYQAARKDSSSPSPARVHGGCSTSSLYLQDLNAAASECIDPSVVFPYPLHDSSSPKPCASPESSAFSPSSDSLLSSNESSPRASPEPLVLHEETPPTTSSDSEEEQEDEEEIDVVSVEKRQPSTKRSGSPSAGGHSKPPHSPLVLKRCHVSTHQHNYAAPPSTRKDYPAAKRAKLDSGRVLKQISNNRRCASPRSSDTEENDKRRTHNVLERQRRNELKRSFFALRDQIPELENNEKAPKVVILKKATAYILAVQAEEQKLVSEKDLLRKRREQLKHKLEQLRNSCA</sequence>
<gene>
    <name type="primary">MYC</name>
</gene>
<organism>
    <name type="scientific">Sylvilagus floridanus</name>
    <name type="common">Cottontail rabbit</name>
    <dbReference type="NCBI Taxonomy" id="9988"/>
    <lineage>
        <taxon>Eukaryota</taxon>
        <taxon>Metazoa</taxon>
        <taxon>Chordata</taxon>
        <taxon>Craniata</taxon>
        <taxon>Vertebrata</taxon>
        <taxon>Euteleostomi</taxon>
        <taxon>Mammalia</taxon>
        <taxon>Eutheria</taxon>
        <taxon>Euarchontoglires</taxon>
        <taxon>Glires</taxon>
        <taxon>Lagomorpha</taxon>
        <taxon>Leporidae</taxon>
        <taxon>Sylvilagus</taxon>
    </lineage>
</organism>
<comment type="function">
    <text evidence="2 3">Transcription factor that binds DNA in a non-specific manner, yet also specifically recognizes the core sequence 5'-CAC[GA]TG-3'. Activates the transcription of growth-related genes. Binds to the VEGFA promoter, promoting VEGFA production and subsequent sprouting angiogenesis. Regulator of somatic reprogramming, controls self-renewal of embryonic stem cells. Functions with TAF6L to activate target gene expression through RNA polymerase II pause release (By similarity). Positively regulates transcription of HNRNPA1, HNRNPA2 and PTBP1 which in turn regulate splicing of pyruvate kinase PKM by binding repressively to sequences flanking PKM exon 9, inhibiting exon 9 inclusion and resulting in exon 10 inclusion and production of the PKM M2 isoform (By similarity).</text>
</comment>
<comment type="subunit">
    <text evidence="2 3">Efficient DNA binding requires dimerization with another bHLH protein. Binds DNA as a heterodimer with MAX (By similarity). Interacts with TAF1C and SPAG9. Interacts with PARP10. Interacts with KDM5A and KDM5B. Interacts (when phosphorylated at Thr-59 and Ser-63) with FBXW7. Interacts with PIM2. Interacts with RIOX1. The heterodimer MYC:MAX interacts with ABI1; the interaction may enhance MYC:MAX transcriptional activity. Interacts with TRIM6 (By similarity). Interacts with NPM1; the binary complex is recruited to the promoter of MYC target genes and enhances their transcription (By similarity). Interacts with NUP205 (By similarity). Interacts with HEATR1; the interaction is required for localization of MYC to the nucleolus (By similarity).</text>
</comment>
<comment type="subcellular location">
    <subcellularLocation>
        <location evidence="2">Nucleus</location>
        <location evidence="2">Nucleoplasm</location>
    </subcellularLocation>
    <subcellularLocation>
        <location evidence="2">Nucleus</location>
        <location evidence="2">Nucleolus</location>
    </subcellularLocation>
    <subcellularLocation>
        <location evidence="2">Nucleus</location>
    </subcellularLocation>
    <subcellularLocation>
        <location evidence="2">Cytoplasm</location>
    </subcellularLocation>
    <subcellularLocation>
        <location evidence="2">Chromosome</location>
    </subcellularLocation>
    <text evidence="2">Association with chromatin is reduced by hyperphosphorylation. Localization to the nucleolus is dependent on HEATR1.</text>
</comment>
<comment type="domain">
    <text evidence="2">The 9aaTAD motif is a transactivation domain present in a large number of yeast and animal transcription factors.</text>
</comment>
<comment type="PTM">
    <text evidence="2 3">Phosphorylated by PRKDC (By similarity). Phosphorylation at Ser-328 by PIM2 leads to the stabilization of MYC (By similarity). Phosphorylation at Ser-62 by CDK2 prevents Ras-induced senescence. Phosphorylated at Ser-62 by DYRK2; this primes the protein for subsequent phosphorylation by GSK3B at Thr-58. Phosphorylation at Thr-58 and Ser-62 by GSK3 is required for ubiquitination and degradation by the proteasome. Dephosphorylation at multiple sites by the PNUTS-PP1 complex promotes MYC stability by preventing ubiquitination by the SCF(FBXW7) complex. Dephosphorylation at Ser-62 by protein phosphatase 2A (PPP2CA) promotes its degradation; interaction with PPP2CA is enhanced by AMBRA1 (By similarity).</text>
</comment>
<comment type="PTM">
    <text evidence="2 3">Ubiquitinated by the SCF(FBXW7) complex when phosphorylated at Thr-58 and Ser-62, leading to its degradation by the proteasome. Ubiquitination is counteracted by USP28 in the nucleoplasm and USP36 in the nucleolus, both interacting with of FBXW7, leading to its deubiquitination and preventing degradation. Also polyubiquitinated by the DCX(TRPC4AP) complex. Ubiquitinated by UBR5 when not forming a heterodimer with another bHLH protein, leading to its degradation: UBR5 recognizes and binds a degron that is only available upon heterodimer dissociation (By similarity). Ubiquitinated by TRIM6 in a phosphorylation-independent manner.</text>
</comment>
<evidence type="ECO:0000250" key="1"/>
<evidence type="ECO:0000250" key="2">
    <source>
        <dbReference type="UniProtKB" id="P01106"/>
    </source>
</evidence>
<evidence type="ECO:0000250" key="3">
    <source>
        <dbReference type="UniProtKB" id="P01108"/>
    </source>
</evidence>
<evidence type="ECO:0000255" key="4">
    <source>
        <dbReference type="PROSITE-ProRule" id="PRU00981"/>
    </source>
</evidence>
<evidence type="ECO:0000256" key="5">
    <source>
        <dbReference type="SAM" id="MobiDB-lite"/>
    </source>
</evidence>
<dbReference type="EMBL" id="AF160491">
    <property type="protein sequence ID" value="AAF80397.1"/>
    <property type="molecule type" value="Genomic_DNA"/>
</dbReference>
<dbReference type="EMBL" id="AF160490">
    <property type="protein sequence ID" value="AAF80397.1"/>
    <property type="status" value="JOINED"/>
    <property type="molecule type" value="Genomic_DNA"/>
</dbReference>
<dbReference type="SMR" id="Q9MZT6"/>
<dbReference type="GlyCosmos" id="Q9MZT6">
    <property type="glycosylation" value="1 site, No reported glycans"/>
</dbReference>
<dbReference type="GO" id="GO:0005737">
    <property type="term" value="C:cytoplasm"/>
    <property type="evidence" value="ECO:0007669"/>
    <property type="project" value="UniProtKB-SubCell"/>
</dbReference>
<dbReference type="GO" id="GO:0005730">
    <property type="term" value="C:nucleolus"/>
    <property type="evidence" value="ECO:0000250"/>
    <property type="project" value="UniProtKB"/>
</dbReference>
<dbReference type="GO" id="GO:0005654">
    <property type="term" value="C:nucleoplasm"/>
    <property type="evidence" value="ECO:0000250"/>
    <property type="project" value="UniProtKB"/>
</dbReference>
<dbReference type="GO" id="GO:0000981">
    <property type="term" value="F:DNA-binding transcription factor activity, RNA polymerase II-specific"/>
    <property type="evidence" value="ECO:0000250"/>
    <property type="project" value="UniProtKB"/>
</dbReference>
<dbReference type="GO" id="GO:0070888">
    <property type="term" value="F:E-box binding"/>
    <property type="evidence" value="ECO:0000250"/>
    <property type="project" value="UniProtKB"/>
</dbReference>
<dbReference type="GO" id="GO:0046983">
    <property type="term" value="F:protein dimerization activity"/>
    <property type="evidence" value="ECO:0007669"/>
    <property type="project" value="InterPro"/>
</dbReference>
<dbReference type="GO" id="GO:0044877">
    <property type="term" value="F:protein-containing complex binding"/>
    <property type="evidence" value="ECO:0000250"/>
    <property type="project" value="UniProtKB"/>
</dbReference>
<dbReference type="GO" id="GO:0006338">
    <property type="term" value="P:chromatin remodeling"/>
    <property type="evidence" value="ECO:0000250"/>
    <property type="project" value="UniProtKB"/>
</dbReference>
<dbReference type="GO" id="GO:0051276">
    <property type="term" value="P:chromosome organization"/>
    <property type="evidence" value="ECO:0000250"/>
    <property type="project" value="UniProtKB"/>
</dbReference>
<dbReference type="GO" id="GO:0006974">
    <property type="term" value="P:DNA damage response"/>
    <property type="evidence" value="ECO:0000250"/>
    <property type="project" value="UniProtKB"/>
</dbReference>
<dbReference type="GO" id="GO:0000082">
    <property type="term" value="P:G1/S transition of mitotic cell cycle"/>
    <property type="evidence" value="ECO:0000250"/>
    <property type="project" value="UniProtKB"/>
</dbReference>
<dbReference type="GO" id="GO:0006879">
    <property type="term" value="P:intracellular iron ion homeostasis"/>
    <property type="evidence" value="ECO:0000250"/>
    <property type="project" value="UniProtKB"/>
</dbReference>
<dbReference type="GO" id="GO:0000165">
    <property type="term" value="P:MAPK cascade"/>
    <property type="evidence" value="ECO:0000250"/>
    <property type="project" value="UniProtKB"/>
</dbReference>
<dbReference type="GO" id="GO:0051782">
    <property type="term" value="P:negative regulation of cell division"/>
    <property type="evidence" value="ECO:0000250"/>
    <property type="project" value="UniProtKB"/>
</dbReference>
<dbReference type="GO" id="GO:0045656">
    <property type="term" value="P:negative regulation of monocyte differentiation"/>
    <property type="evidence" value="ECO:0000250"/>
    <property type="project" value="UniProtKB"/>
</dbReference>
<dbReference type="GO" id="GO:0045893">
    <property type="term" value="P:positive regulation of DNA-templated transcription"/>
    <property type="evidence" value="ECO:0000250"/>
    <property type="project" value="UniProtKB"/>
</dbReference>
<dbReference type="GO" id="GO:0050679">
    <property type="term" value="P:positive regulation of epithelial cell proliferation"/>
    <property type="evidence" value="ECO:0000250"/>
    <property type="project" value="UniProtKB"/>
</dbReference>
<dbReference type="GO" id="GO:0048146">
    <property type="term" value="P:positive regulation of fibroblast proliferation"/>
    <property type="evidence" value="ECO:0000250"/>
    <property type="project" value="UniProtKB"/>
</dbReference>
<dbReference type="GO" id="GO:0045944">
    <property type="term" value="P:positive regulation of transcription by RNA polymerase II"/>
    <property type="evidence" value="ECO:0000250"/>
    <property type="project" value="UniProtKB"/>
</dbReference>
<dbReference type="GO" id="GO:0006355">
    <property type="term" value="P:regulation of DNA-templated transcription"/>
    <property type="evidence" value="ECO:0000250"/>
    <property type="project" value="UniProtKB"/>
</dbReference>
<dbReference type="GO" id="GO:1904672">
    <property type="term" value="P:regulation of somatic stem cell population maintenance"/>
    <property type="evidence" value="ECO:0000250"/>
    <property type="project" value="UniProtKB"/>
</dbReference>
<dbReference type="GO" id="GO:0032204">
    <property type="term" value="P:regulation of telomere maintenance"/>
    <property type="evidence" value="ECO:0000250"/>
    <property type="project" value="UniProtKB"/>
</dbReference>
<dbReference type="GO" id="GO:0016072">
    <property type="term" value="P:rRNA metabolic process"/>
    <property type="evidence" value="ECO:0000250"/>
    <property type="project" value="UniProtKB"/>
</dbReference>
<dbReference type="CDD" id="cd11458">
    <property type="entry name" value="bHLHzip_c-Myc"/>
    <property type="match status" value="1"/>
</dbReference>
<dbReference type="FunFam" id="4.10.280.10:FF:000019">
    <property type="entry name" value="Myc proto-oncogene protein"/>
    <property type="match status" value="1"/>
</dbReference>
<dbReference type="Gene3D" id="4.10.280.10">
    <property type="entry name" value="Helix-loop-helix DNA-binding domain"/>
    <property type="match status" value="1"/>
</dbReference>
<dbReference type="InterPro" id="IPR011598">
    <property type="entry name" value="bHLH_dom"/>
</dbReference>
<dbReference type="InterPro" id="IPR036638">
    <property type="entry name" value="HLH_DNA-bd_sf"/>
</dbReference>
<dbReference type="InterPro" id="IPR003327">
    <property type="entry name" value="Myc-LZ"/>
</dbReference>
<dbReference type="InterPro" id="IPR050433">
    <property type="entry name" value="Myc_transcription_factors"/>
</dbReference>
<dbReference type="InterPro" id="IPR002418">
    <property type="entry name" value="Tscrpt_reg_Myc"/>
</dbReference>
<dbReference type="InterPro" id="IPR012682">
    <property type="entry name" value="Tscrpt_reg_Myc_N"/>
</dbReference>
<dbReference type="PANTHER" id="PTHR45851">
    <property type="entry name" value="MYC PROTO-ONCOGENE"/>
    <property type="match status" value="1"/>
</dbReference>
<dbReference type="Pfam" id="PF00010">
    <property type="entry name" value="HLH"/>
    <property type="match status" value="1"/>
</dbReference>
<dbReference type="Pfam" id="PF02344">
    <property type="entry name" value="Myc-LZ"/>
    <property type="match status" value="1"/>
</dbReference>
<dbReference type="Pfam" id="PF01056">
    <property type="entry name" value="Myc_N"/>
    <property type="match status" value="1"/>
</dbReference>
<dbReference type="PIRSF" id="PIRSF001705">
    <property type="entry name" value="Myc_protein"/>
    <property type="match status" value="1"/>
</dbReference>
<dbReference type="PRINTS" id="PR00044">
    <property type="entry name" value="LEUZIPPRMYC"/>
</dbReference>
<dbReference type="SMART" id="SM00353">
    <property type="entry name" value="HLH"/>
    <property type="match status" value="1"/>
</dbReference>
<dbReference type="SUPFAM" id="SSF47459">
    <property type="entry name" value="HLH, helix-loop-helix DNA-binding domain"/>
    <property type="match status" value="1"/>
</dbReference>
<dbReference type="PROSITE" id="PS50888">
    <property type="entry name" value="BHLH"/>
    <property type="match status" value="1"/>
</dbReference>